<sequence length="103" mass="11133">MADDKDSLPKLKDLAFLKNQLESLQRRVEDEVNSGVGQDGSLLSSPFLKGFLAGYVVAKLRASAVLGFAVGTCTGIYAAQAYAVPNVEKTLRDYLQLLRKGPD</sequence>
<organism>
    <name type="scientific">Homo sapiens</name>
    <name type="common">Human</name>
    <dbReference type="NCBI Taxonomy" id="9606"/>
    <lineage>
        <taxon>Eukaryota</taxon>
        <taxon>Metazoa</taxon>
        <taxon>Chordata</taxon>
        <taxon>Craniata</taxon>
        <taxon>Vertebrata</taxon>
        <taxon>Euteleostomi</taxon>
        <taxon>Mammalia</taxon>
        <taxon>Eutheria</taxon>
        <taxon>Euarchontoglires</taxon>
        <taxon>Primates</taxon>
        <taxon>Haplorrhini</taxon>
        <taxon>Catarrhini</taxon>
        <taxon>Hominidae</taxon>
        <taxon>Homo</taxon>
    </lineage>
</organism>
<dbReference type="EMBL" id="HF548106">
    <property type="protein sequence ID" value="CCO13817.1"/>
    <property type="molecule type" value="Genomic_DNA"/>
</dbReference>
<dbReference type="EMBL" id="AC011399">
    <property type="status" value="NOT_ANNOTATED_CDS"/>
    <property type="molecule type" value="Genomic_DNA"/>
</dbReference>
<dbReference type="EMBL" id="AC116353">
    <property type="status" value="NOT_ANNOTATED_CDS"/>
    <property type="molecule type" value="Genomic_DNA"/>
</dbReference>
<dbReference type="SMR" id="L0R6Q1"/>
<dbReference type="BioMuta" id="SLC35A4"/>
<dbReference type="jPOST" id="L0R6Q1"/>
<dbReference type="MassIVE" id="L0R6Q1"/>
<dbReference type="Pumba" id="L0R6Q1"/>
<dbReference type="Antibodypedia" id="45451">
    <property type="antibodies" value="23 antibodies from 13 providers"/>
</dbReference>
<dbReference type="MANE-Select" id="ENST00000715679.1">
    <property type="protein sequence ID" value="ENSP00000520497.1"/>
    <property type="RefSeq nucleotide sequence ID" value="NM_001394034.2"/>
    <property type="RefSeq protein sequence ID" value="NP_001380963.1"/>
</dbReference>
<dbReference type="UCSC" id="uc063hwg.1">
    <molecule id="L0R6Q1-1"/>
    <property type="organism name" value="human"/>
</dbReference>
<dbReference type="AGR" id="HGNC:20753"/>
<dbReference type="GeneCards" id="SLC35A4"/>
<dbReference type="HGNC" id="HGNC:20753">
    <property type="gene designation" value="SLC35A4"/>
</dbReference>
<dbReference type="HPA" id="ENSG00000176087">
    <property type="expression patterns" value="Low tissue specificity"/>
</dbReference>
<dbReference type="neXtProt" id="NX_L0R6Q1"/>
<dbReference type="VEuPathDB" id="HostDB:ENSG00000176087"/>
<dbReference type="GeneTree" id="ENSGT00390000007844"/>
<dbReference type="HOGENOM" id="CLU_2262814_0_0_1"/>
<dbReference type="OrthoDB" id="419167at2759"/>
<dbReference type="PathwayCommons" id="L0R6Q1"/>
<dbReference type="SignaLink" id="L0R6Q1"/>
<dbReference type="ChiTaRS" id="SLC35A4">
    <property type="organism name" value="human"/>
</dbReference>
<dbReference type="Pharos" id="L0R6Q1">
    <property type="development level" value="Tdark"/>
</dbReference>
<dbReference type="Proteomes" id="UP000005640">
    <property type="component" value="Chromosome 5"/>
</dbReference>
<dbReference type="Bgee" id="ENSG00000176087">
    <property type="expression patterns" value="Expressed in islet of Langerhans and 180 other cell types or tissues"/>
</dbReference>
<dbReference type="ExpressionAtlas" id="L0R6Q1">
    <property type="expression patterns" value="baseline and differential"/>
</dbReference>
<dbReference type="GO" id="GO:0005743">
    <property type="term" value="C:mitochondrial inner membrane"/>
    <property type="evidence" value="ECO:0000314"/>
    <property type="project" value="UniProtKB"/>
</dbReference>
<dbReference type="GO" id="GO:0005739">
    <property type="term" value="C:mitochondrion"/>
    <property type="evidence" value="ECO:0006056"/>
    <property type="project" value="FlyBase"/>
</dbReference>
<dbReference type="GO" id="GO:1901857">
    <property type="term" value="P:positive regulation of cellular respiration"/>
    <property type="evidence" value="ECO:0000315"/>
    <property type="project" value="UniProtKB"/>
</dbReference>
<dbReference type="GO" id="GO:0032056">
    <property type="term" value="P:positive regulation of translation in response to stress"/>
    <property type="evidence" value="ECO:0000314"/>
    <property type="project" value="UniProtKB"/>
</dbReference>
<dbReference type="InterPro" id="IPR027854">
    <property type="entry name" value="STMP1"/>
</dbReference>
<dbReference type="Pfam" id="PF15054">
    <property type="entry name" value="DUF4535"/>
    <property type="match status" value="1"/>
</dbReference>
<accession>L0R6Q1</accession>
<feature type="chain" id="PRO_0000439345" description="SLC35A4 upstream open reading frame protein">
    <location>
        <begin position="1"/>
        <end position="103"/>
    </location>
</feature>
<feature type="transmembrane region" description="Helical" evidence="1">
    <location>
        <begin position="62"/>
        <end position="84"/>
    </location>
</feature>
<proteinExistence type="evidence at protein level"/>
<name>S35U4_HUMAN</name>
<keyword id="KW-0024">Alternative initiation</keyword>
<keyword id="KW-0472">Membrane</keyword>
<keyword id="KW-0496">Mitochondrion</keyword>
<keyword id="KW-0999">Mitochondrion inner membrane</keyword>
<keyword id="KW-1267">Proteomics identification</keyword>
<keyword id="KW-1185">Reference proteome</keyword>
<keyword id="KW-0812">Transmembrane</keyword>
<keyword id="KW-1133">Transmembrane helix</keyword>
<reference key="1">
    <citation type="journal article" date="2013" name="PLoS ONE">
        <title>Direct detection of alternative open reading frames translation products in human significantly expands the proteome.</title>
        <authorList>
            <person name="Vanderperre B."/>
            <person name="Lucier J.-F."/>
            <person name="Motard J."/>
            <person name="Tremblay G."/>
            <person name="Vanderperre S."/>
            <person name="Wisztorski M."/>
            <person name="Salzet M."/>
            <person name="Boisvert F.-M."/>
            <person name="Roucou X."/>
        </authorList>
    </citation>
    <scope>NUCLEOTIDE SEQUENCE [GENOMIC DNA]</scope>
    <scope>ALTERNATIVE INITIATION (ISOFORM 2)</scope>
</reference>
<reference key="2">
    <citation type="journal article" date="2004" name="Nature">
        <title>The DNA sequence and comparative analysis of human chromosome 5.</title>
        <authorList>
            <person name="Schmutz J."/>
            <person name="Martin J."/>
            <person name="Terry A."/>
            <person name="Couronne O."/>
            <person name="Grimwood J."/>
            <person name="Lowry S."/>
            <person name="Gordon L.A."/>
            <person name="Scott D."/>
            <person name="Xie G."/>
            <person name="Huang W."/>
            <person name="Hellsten U."/>
            <person name="Tran-Gyamfi M."/>
            <person name="She X."/>
            <person name="Prabhakar S."/>
            <person name="Aerts A."/>
            <person name="Altherr M."/>
            <person name="Bajorek E."/>
            <person name="Black S."/>
            <person name="Branscomb E."/>
            <person name="Caoile C."/>
            <person name="Challacombe J.F."/>
            <person name="Chan Y.M."/>
            <person name="Denys M."/>
            <person name="Detter J.C."/>
            <person name="Escobar J."/>
            <person name="Flowers D."/>
            <person name="Fotopulos D."/>
            <person name="Glavina T."/>
            <person name="Gomez M."/>
            <person name="Gonzales E."/>
            <person name="Goodstein D."/>
            <person name="Grigoriev I."/>
            <person name="Groza M."/>
            <person name="Hammon N."/>
            <person name="Hawkins T."/>
            <person name="Haydu L."/>
            <person name="Israni S."/>
            <person name="Jett J."/>
            <person name="Kadner K."/>
            <person name="Kimball H."/>
            <person name="Kobayashi A."/>
            <person name="Lopez F."/>
            <person name="Lou Y."/>
            <person name="Martinez D."/>
            <person name="Medina C."/>
            <person name="Morgan J."/>
            <person name="Nandkeshwar R."/>
            <person name="Noonan J.P."/>
            <person name="Pitluck S."/>
            <person name="Pollard M."/>
            <person name="Predki P."/>
            <person name="Priest J."/>
            <person name="Ramirez L."/>
            <person name="Retterer J."/>
            <person name="Rodriguez A."/>
            <person name="Rogers S."/>
            <person name="Salamov A."/>
            <person name="Salazar A."/>
            <person name="Thayer N."/>
            <person name="Tice H."/>
            <person name="Tsai M."/>
            <person name="Ustaszewska A."/>
            <person name="Vo N."/>
            <person name="Wheeler J."/>
            <person name="Wu K."/>
            <person name="Yang J."/>
            <person name="Dickson M."/>
            <person name="Cheng J.-F."/>
            <person name="Eichler E.E."/>
            <person name="Olsen A."/>
            <person name="Pennacchio L.A."/>
            <person name="Rokhsar D.S."/>
            <person name="Richardson P."/>
            <person name="Lucas S.M."/>
            <person name="Myers R.M."/>
            <person name="Rubin E.M."/>
        </authorList>
    </citation>
    <scope>NUCLEOTIDE SEQUENCE [LARGE SCALE GENOMIC DNA]</scope>
</reference>
<reference key="3">
    <citation type="journal article" date="2015" name="Elife">
        <title>Translation of 5' leaders is pervasive in genes resistant to eIF2 repression.</title>
        <authorList>
            <person name="Andreev D.E."/>
            <person name="O'Connor P.B."/>
            <person name="Fahey C."/>
            <person name="Kenny E.M."/>
            <person name="Terenin I.M."/>
            <person name="Dmitriev S.E."/>
            <person name="Cormican P."/>
            <person name="Morris D.W."/>
            <person name="Shatsky I.N."/>
            <person name="Baranov P.V."/>
        </authorList>
    </citation>
    <scope>ALTERNATIVE INITIATION (ISOFORM 2)</scope>
</reference>
<reference key="4">
    <citation type="journal article" date="2024" name="J. Mol. Biol.">
        <title>An Inner Mitochondrial Membrane Microprotein from the SLC35A4 Upstream ORF Regulates Cellular Metabolism.</title>
        <authorList>
            <person name="Rocha A.L."/>
            <person name="Pai V."/>
            <person name="Perkins G."/>
            <person name="Chang T."/>
            <person name="Ma J."/>
            <person name="De Souza E.V."/>
            <person name="Chu Q."/>
            <person name="Vaughan J.M."/>
            <person name="Diedrich J.K."/>
            <person name="Ellisman M.H."/>
            <person name="Saghatelian A."/>
        </authorList>
    </citation>
    <scope>FUNCTION</scope>
    <scope>SUBCELLULAR LOCATION</scope>
    <scope>IDENTIFICATION BY MASS SPECTROMETRY</scope>
</reference>
<evidence type="ECO:0000255" key="1"/>
<evidence type="ECO:0000269" key="2">
    <source>
    </source>
</evidence>
<evidence type="ECO:0000269" key="3">
    <source>
    </source>
</evidence>
<evidence type="ECO:0000303" key="4">
    <source>
    </source>
</evidence>
<evidence type="ECO:0000303" key="5">
    <source>
    </source>
</evidence>
<evidence type="ECO:0000305" key="6"/>
<evidence type="ECO:0000312" key="7">
    <source>
        <dbReference type="HGNC" id="HGNC:20753"/>
    </source>
</evidence>
<gene>
    <name evidence="7" type="primary">SLC35A4</name>
</gene>
<protein>
    <recommendedName>
        <fullName evidence="6">SLC35A4 upstream open reading frame protein</fullName>
    </recommendedName>
    <alternativeName>
        <fullName evidence="5">SLC35A4 microprotein</fullName>
        <shortName evidence="5">SLC35A4-MP</shortName>
    </alternativeName>
</protein>
<comment type="function">
    <text evidence="3">Required to maintain cellular respiration.</text>
</comment>
<comment type="subcellular location">
    <subcellularLocation>
        <location evidence="3">Mitochondrion inner membrane</location>
        <topology evidence="1">Single-pass membrane protein</topology>
    </subcellularLocation>
</comment>
<comment type="alternative products">
    <event type="alternative initiation"/>
    <isoform>
        <id>L0R6Q1-1</id>
        <name>2</name>
        <name evidence="4">uORF</name>
        <sequence type="displayed"/>
    </isoform>
    <isoform>
        <id>Q96G79-1</id>
        <name>1</name>
        <sequence type="external"/>
    </isoform>
</comment>
<comment type="miscellaneous">
    <molecule>Isoform 2</molecule>
    <text evidence="2">Product of the upstream open reading frame of this bicistronic gene. This may be the major product of the gene under normal conditions.</text>
</comment>